<protein>
    <recommendedName>
        <fullName evidence="1">Dihydroorotate dehydrogenase (quinone)</fullName>
        <ecNumber evidence="1">1.3.5.2</ecNumber>
    </recommendedName>
    <alternativeName>
        <fullName evidence="1">DHOdehase</fullName>
        <shortName evidence="1">DHOD</shortName>
        <shortName evidence="1">DHODase</shortName>
    </alternativeName>
    <alternativeName>
        <fullName evidence="1">Dihydroorotate oxidase</fullName>
    </alternativeName>
</protein>
<organism>
    <name type="scientific">Leptothrix cholodnii (strain ATCC 51168 / LMG 8142 / SP-6)</name>
    <name type="common">Leptothrix discophora (strain SP-6)</name>
    <dbReference type="NCBI Taxonomy" id="395495"/>
    <lineage>
        <taxon>Bacteria</taxon>
        <taxon>Pseudomonadati</taxon>
        <taxon>Pseudomonadota</taxon>
        <taxon>Betaproteobacteria</taxon>
        <taxon>Burkholderiales</taxon>
        <taxon>Sphaerotilaceae</taxon>
        <taxon>Leptothrix</taxon>
    </lineage>
</organism>
<accession>B1Y3C1</accession>
<sequence>MALVPYPLTRPFLFGMDPEAAHELTLGSIARFQNTPLQCLWSQSRIADPVTVAGLRFPNRIGLAAGLDKNGRCIDGLGAMGFGFIEVGTVTPLGQPGNPKPRMFRLPEKNALINRLGFNNEGLASFLANVQRATSFRRNGGLLGLNIGKNAVTPIENAADDYLIALAGVYPHADYVTVNISSPNTKNLRALQSDAALDALLGALQTRRLALATEHGRSVPMFVKIAPDLDEAQVRVIAATLRHNGIDGVIATNTTLARDAVAGLAHADEAGGLSGAPVLAASNRVIAQLRAELGGAYPIIGVGGVLSGADARSKRAAGADLVQVYTGLIYRGPALVPECARALRG</sequence>
<evidence type="ECO:0000255" key="1">
    <source>
        <dbReference type="HAMAP-Rule" id="MF_00225"/>
    </source>
</evidence>
<feature type="chain" id="PRO_1000100271" description="Dihydroorotate dehydrogenase (quinone)">
    <location>
        <begin position="1"/>
        <end position="345"/>
    </location>
</feature>
<feature type="active site" description="Nucleophile" evidence="1">
    <location>
        <position position="182"/>
    </location>
</feature>
<feature type="binding site" evidence="1">
    <location>
        <begin position="65"/>
        <end position="69"/>
    </location>
    <ligand>
        <name>FMN</name>
        <dbReference type="ChEBI" id="CHEBI:58210"/>
    </ligand>
</feature>
<feature type="binding site" evidence="1">
    <location>
        <position position="69"/>
    </location>
    <ligand>
        <name>substrate</name>
    </ligand>
</feature>
<feature type="binding site" evidence="1">
    <location>
        <position position="89"/>
    </location>
    <ligand>
        <name>FMN</name>
        <dbReference type="ChEBI" id="CHEBI:58210"/>
    </ligand>
</feature>
<feature type="binding site" evidence="1">
    <location>
        <begin position="114"/>
        <end position="118"/>
    </location>
    <ligand>
        <name>substrate</name>
    </ligand>
</feature>
<feature type="binding site" evidence="1">
    <location>
        <position position="146"/>
    </location>
    <ligand>
        <name>FMN</name>
        <dbReference type="ChEBI" id="CHEBI:58210"/>
    </ligand>
</feature>
<feature type="binding site" evidence="1">
    <location>
        <position position="179"/>
    </location>
    <ligand>
        <name>FMN</name>
        <dbReference type="ChEBI" id="CHEBI:58210"/>
    </ligand>
</feature>
<feature type="binding site" evidence="1">
    <location>
        <position position="179"/>
    </location>
    <ligand>
        <name>substrate</name>
    </ligand>
</feature>
<feature type="binding site" evidence="1">
    <location>
        <position position="184"/>
    </location>
    <ligand>
        <name>substrate</name>
    </ligand>
</feature>
<feature type="binding site" evidence="1">
    <location>
        <position position="224"/>
    </location>
    <ligand>
        <name>FMN</name>
        <dbReference type="ChEBI" id="CHEBI:58210"/>
    </ligand>
</feature>
<feature type="binding site" evidence="1">
    <location>
        <position position="252"/>
    </location>
    <ligand>
        <name>FMN</name>
        <dbReference type="ChEBI" id="CHEBI:58210"/>
    </ligand>
</feature>
<feature type="binding site" evidence="1">
    <location>
        <begin position="253"/>
        <end position="254"/>
    </location>
    <ligand>
        <name>substrate</name>
    </ligand>
</feature>
<feature type="binding site" evidence="1">
    <location>
        <position position="275"/>
    </location>
    <ligand>
        <name>FMN</name>
        <dbReference type="ChEBI" id="CHEBI:58210"/>
    </ligand>
</feature>
<feature type="binding site" evidence="1">
    <location>
        <position position="304"/>
    </location>
    <ligand>
        <name>FMN</name>
        <dbReference type="ChEBI" id="CHEBI:58210"/>
    </ligand>
</feature>
<feature type="binding site" evidence="1">
    <location>
        <begin position="325"/>
        <end position="326"/>
    </location>
    <ligand>
        <name>FMN</name>
        <dbReference type="ChEBI" id="CHEBI:58210"/>
    </ligand>
</feature>
<comment type="function">
    <text evidence="1">Catalyzes the conversion of dihydroorotate to orotate with quinone as electron acceptor.</text>
</comment>
<comment type="catalytic activity">
    <reaction evidence="1">
        <text>(S)-dihydroorotate + a quinone = orotate + a quinol</text>
        <dbReference type="Rhea" id="RHEA:30187"/>
        <dbReference type="ChEBI" id="CHEBI:24646"/>
        <dbReference type="ChEBI" id="CHEBI:30839"/>
        <dbReference type="ChEBI" id="CHEBI:30864"/>
        <dbReference type="ChEBI" id="CHEBI:132124"/>
        <dbReference type="EC" id="1.3.5.2"/>
    </reaction>
</comment>
<comment type="cofactor">
    <cofactor evidence="1">
        <name>FMN</name>
        <dbReference type="ChEBI" id="CHEBI:58210"/>
    </cofactor>
    <text evidence="1">Binds 1 FMN per subunit.</text>
</comment>
<comment type="pathway">
    <text evidence="1">Pyrimidine metabolism; UMP biosynthesis via de novo pathway; orotate from (S)-dihydroorotate (quinone route): step 1/1.</text>
</comment>
<comment type="subunit">
    <text evidence="1">Monomer.</text>
</comment>
<comment type="subcellular location">
    <subcellularLocation>
        <location evidence="1">Cell membrane</location>
        <topology evidence="1">Peripheral membrane protein</topology>
    </subcellularLocation>
</comment>
<comment type="similarity">
    <text evidence="1">Belongs to the dihydroorotate dehydrogenase family. Type 2 subfamily.</text>
</comment>
<gene>
    <name evidence="1" type="primary">pyrD</name>
    <name type="ordered locus">Lcho_1055</name>
</gene>
<proteinExistence type="inferred from homology"/>
<reference key="1">
    <citation type="submission" date="2008-03" db="EMBL/GenBank/DDBJ databases">
        <title>Complete sequence of Leptothrix cholodnii SP-6.</title>
        <authorList>
            <consortium name="US DOE Joint Genome Institute"/>
            <person name="Copeland A."/>
            <person name="Lucas S."/>
            <person name="Lapidus A."/>
            <person name="Glavina del Rio T."/>
            <person name="Dalin E."/>
            <person name="Tice H."/>
            <person name="Bruce D."/>
            <person name="Goodwin L."/>
            <person name="Pitluck S."/>
            <person name="Chertkov O."/>
            <person name="Brettin T."/>
            <person name="Detter J.C."/>
            <person name="Han C."/>
            <person name="Kuske C.R."/>
            <person name="Schmutz J."/>
            <person name="Larimer F."/>
            <person name="Land M."/>
            <person name="Hauser L."/>
            <person name="Kyrpides N."/>
            <person name="Lykidis A."/>
            <person name="Emerson D."/>
            <person name="Richardson P."/>
        </authorList>
    </citation>
    <scope>NUCLEOTIDE SEQUENCE [LARGE SCALE GENOMIC DNA]</scope>
    <source>
        <strain>ATCC 51168 / LMG 8142 / SP-6</strain>
    </source>
</reference>
<name>PYRD_LEPCP</name>
<keyword id="KW-1003">Cell membrane</keyword>
<keyword id="KW-0285">Flavoprotein</keyword>
<keyword id="KW-0288">FMN</keyword>
<keyword id="KW-0472">Membrane</keyword>
<keyword id="KW-0560">Oxidoreductase</keyword>
<keyword id="KW-0665">Pyrimidine biosynthesis</keyword>
<keyword id="KW-1185">Reference proteome</keyword>
<dbReference type="EC" id="1.3.5.2" evidence="1"/>
<dbReference type="EMBL" id="CP001013">
    <property type="protein sequence ID" value="ACB33324.1"/>
    <property type="molecule type" value="Genomic_DNA"/>
</dbReference>
<dbReference type="RefSeq" id="WP_012346086.1">
    <property type="nucleotide sequence ID" value="NC_010524.1"/>
</dbReference>
<dbReference type="SMR" id="B1Y3C1"/>
<dbReference type="STRING" id="395495.Lcho_1055"/>
<dbReference type="KEGG" id="lch:Lcho_1055"/>
<dbReference type="eggNOG" id="COG0167">
    <property type="taxonomic scope" value="Bacteria"/>
</dbReference>
<dbReference type="HOGENOM" id="CLU_013640_2_0_4"/>
<dbReference type="OrthoDB" id="9802377at2"/>
<dbReference type="UniPathway" id="UPA00070">
    <property type="reaction ID" value="UER00946"/>
</dbReference>
<dbReference type="Proteomes" id="UP000001693">
    <property type="component" value="Chromosome"/>
</dbReference>
<dbReference type="GO" id="GO:0005737">
    <property type="term" value="C:cytoplasm"/>
    <property type="evidence" value="ECO:0007669"/>
    <property type="project" value="InterPro"/>
</dbReference>
<dbReference type="GO" id="GO:0005886">
    <property type="term" value="C:plasma membrane"/>
    <property type="evidence" value="ECO:0007669"/>
    <property type="project" value="UniProtKB-SubCell"/>
</dbReference>
<dbReference type="GO" id="GO:0106430">
    <property type="term" value="F:dihydroorotate dehydrogenase (quinone) activity"/>
    <property type="evidence" value="ECO:0007669"/>
    <property type="project" value="UniProtKB-EC"/>
</dbReference>
<dbReference type="GO" id="GO:0006207">
    <property type="term" value="P:'de novo' pyrimidine nucleobase biosynthetic process"/>
    <property type="evidence" value="ECO:0007669"/>
    <property type="project" value="InterPro"/>
</dbReference>
<dbReference type="GO" id="GO:0044205">
    <property type="term" value="P:'de novo' UMP biosynthetic process"/>
    <property type="evidence" value="ECO:0007669"/>
    <property type="project" value="UniProtKB-UniRule"/>
</dbReference>
<dbReference type="CDD" id="cd04738">
    <property type="entry name" value="DHOD_2_like"/>
    <property type="match status" value="1"/>
</dbReference>
<dbReference type="Gene3D" id="3.20.20.70">
    <property type="entry name" value="Aldolase class I"/>
    <property type="match status" value="1"/>
</dbReference>
<dbReference type="HAMAP" id="MF_00225">
    <property type="entry name" value="DHO_dh_type2"/>
    <property type="match status" value="1"/>
</dbReference>
<dbReference type="InterPro" id="IPR013785">
    <property type="entry name" value="Aldolase_TIM"/>
</dbReference>
<dbReference type="InterPro" id="IPR050074">
    <property type="entry name" value="DHO_dehydrogenase"/>
</dbReference>
<dbReference type="InterPro" id="IPR012135">
    <property type="entry name" value="Dihydroorotate_DH_1_2"/>
</dbReference>
<dbReference type="InterPro" id="IPR005719">
    <property type="entry name" value="Dihydroorotate_DH_2"/>
</dbReference>
<dbReference type="InterPro" id="IPR005720">
    <property type="entry name" value="Dihydroorotate_DH_cat"/>
</dbReference>
<dbReference type="InterPro" id="IPR001295">
    <property type="entry name" value="Dihydroorotate_DH_CS"/>
</dbReference>
<dbReference type="NCBIfam" id="NF003644">
    <property type="entry name" value="PRK05286.1-1"/>
    <property type="match status" value="1"/>
</dbReference>
<dbReference type="NCBIfam" id="NF003645">
    <property type="entry name" value="PRK05286.1-2"/>
    <property type="match status" value="1"/>
</dbReference>
<dbReference type="NCBIfam" id="NF003646">
    <property type="entry name" value="PRK05286.1-4"/>
    <property type="match status" value="1"/>
</dbReference>
<dbReference type="NCBIfam" id="NF003652">
    <property type="entry name" value="PRK05286.2-5"/>
    <property type="match status" value="1"/>
</dbReference>
<dbReference type="NCBIfam" id="TIGR01036">
    <property type="entry name" value="pyrD_sub2"/>
    <property type="match status" value="1"/>
</dbReference>
<dbReference type="PANTHER" id="PTHR48109:SF4">
    <property type="entry name" value="DIHYDROOROTATE DEHYDROGENASE (QUINONE), MITOCHONDRIAL"/>
    <property type="match status" value="1"/>
</dbReference>
<dbReference type="PANTHER" id="PTHR48109">
    <property type="entry name" value="DIHYDROOROTATE DEHYDROGENASE (QUINONE), MITOCHONDRIAL-RELATED"/>
    <property type="match status" value="1"/>
</dbReference>
<dbReference type="Pfam" id="PF01180">
    <property type="entry name" value="DHO_dh"/>
    <property type="match status" value="1"/>
</dbReference>
<dbReference type="PIRSF" id="PIRSF000164">
    <property type="entry name" value="DHO_oxidase"/>
    <property type="match status" value="1"/>
</dbReference>
<dbReference type="SUPFAM" id="SSF51395">
    <property type="entry name" value="FMN-linked oxidoreductases"/>
    <property type="match status" value="1"/>
</dbReference>
<dbReference type="PROSITE" id="PS00911">
    <property type="entry name" value="DHODEHASE_1"/>
    <property type="match status" value="1"/>
</dbReference>